<proteinExistence type="inferred from homology"/>
<protein>
    <recommendedName>
        <fullName evidence="1">Small ribosomal subunit protein uS8</fullName>
    </recommendedName>
    <alternativeName>
        <fullName evidence="2">30S ribosomal protein S8</fullName>
    </alternativeName>
</protein>
<feature type="chain" id="PRO_0000126445" description="Small ribosomal subunit protein uS8">
    <location>
        <begin position="1"/>
        <end position="131"/>
    </location>
</feature>
<comment type="function">
    <text evidence="1">One of the primary rRNA binding proteins, it binds directly to 16S rRNA central domain where it helps coordinate assembly of the platform of the 30S subunit.</text>
</comment>
<comment type="subunit">
    <text evidence="1">Part of the 30S ribosomal subunit. Contacts proteins S5 and S12.</text>
</comment>
<comment type="similarity">
    <text evidence="1">Belongs to the universal ribosomal protein uS8 family.</text>
</comment>
<keyword id="KW-1185">Reference proteome</keyword>
<keyword id="KW-0687">Ribonucleoprotein</keyword>
<keyword id="KW-0689">Ribosomal protein</keyword>
<keyword id="KW-0694">RNA-binding</keyword>
<keyword id="KW-0699">rRNA-binding</keyword>
<dbReference type="EMBL" id="BA000026">
    <property type="protein sequence ID" value="BAC44789.1"/>
    <property type="molecule type" value="Genomic_DNA"/>
</dbReference>
<dbReference type="RefSeq" id="WP_011077817.1">
    <property type="nucleotide sequence ID" value="NC_004432.1"/>
</dbReference>
<dbReference type="SMR" id="Q8EUC7"/>
<dbReference type="FunCoup" id="Q8EUC7">
    <property type="interactions" value="230"/>
</dbReference>
<dbReference type="STRING" id="272633.gene:10732123"/>
<dbReference type="KEGG" id="mpe:MYPE10030"/>
<dbReference type="eggNOG" id="COG0096">
    <property type="taxonomic scope" value="Bacteria"/>
</dbReference>
<dbReference type="HOGENOM" id="CLU_098428_0_2_14"/>
<dbReference type="InParanoid" id="Q8EUC7"/>
<dbReference type="Proteomes" id="UP000002522">
    <property type="component" value="Chromosome"/>
</dbReference>
<dbReference type="GO" id="GO:1990904">
    <property type="term" value="C:ribonucleoprotein complex"/>
    <property type="evidence" value="ECO:0007669"/>
    <property type="project" value="UniProtKB-KW"/>
</dbReference>
<dbReference type="GO" id="GO:0005840">
    <property type="term" value="C:ribosome"/>
    <property type="evidence" value="ECO:0007669"/>
    <property type="project" value="UniProtKB-KW"/>
</dbReference>
<dbReference type="GO" id="GO:0019843">
    <property type="term" value="F:rRNA binding"/>
    <property type="evidence" value="ECO:0007669"/>
    <property type="project" value="UniProtKB-UniRule"/>
</dbReference>
<dbReference type="GO" id="GO:0003735">
    <property type="term" value="F:structural constituent of ribosome"/>
    <property type="evidence" value="ECO:0007669"/>
    <property type="project" value="InterPro"/>
</dbReference>
<dbReference type="GO" id="GO:0006412">
    <property type="term" value="P:translation"/>
    <property type="evidence" value="ECO:0007669"/>
    <property type="project" value="UniProtKB-UniRule"/>
</dbReference>
<dbReference type="FunFam" id="3.30.1490.10:FF:000001">
    <property type="entry name" value="30S ribosomal protein S8"/>
    <property type="match status" value="1"/>
</dbReference>
<dbReference type="Gene3D" id="3.30.1370.30">
    <property type="match status" value="1"/>
</dbReference>
<dbReference type="Gene3D" id="3.30.1490.10">
    <property type="match status" value="1"/>
</dbReference>
<dbReference type="HAMAP" id="MF_01302_B">
    <property type="entry name" value="Ribosomal_uS8_B"/>
    <property type="match status" value="1"/>
</dbReference>
<dbReference type="InterPro" id="IPR000630">
    <property type="entry name" value="Ribosomal_uS8"/>
</dbReference>
<dbReference type="InterPro" id="IPR047863">
    <property type="entry name" value="Ribosomal_uS8_CS"/>
</dbReference>
<dbReference type="InterPro" id="IPR035987">
    <property type="entry name" value="Ribosomal_uS8_sf"/>
</dbReference>
<dbReference type="NCBIfam" id="NF001109">
    <property type="entry name" value="PRK00136.1"/>
    <property type="match status" value="1"/>
</dbReference>
<dbReference type="PANTHER" id="PTHR11758">
    <property type="entry name" value="40S RIBOSOMAL PROTEIN S15A"/>
    <property type="match status" value="1"/>
</dbReference>
<dbReference type="Pfam" id="PF00410">
    <property type="entry name" value="Ribosomal_S8"/>
    <property type="match status" value="1"/>
</dbReference>
<dbReference type="SUPFAM" id="SSF56047">
    <property type="entry name" value="Ribosomal protein S8"/>
    <property type="match status" value="1"/>
</dbReference>
<dbReference type="PROSITE" id="PS00053">
    <property type="entry name" value="RIBOSOMAL_S8"/>
    <property type="match status" value="1"/>
</dbReference>
<organism>
    <name type="scientific">Malacoplasma penetrans (strain HF-2)</name>
    <name type="common">Mycoplasma penetrans</name>
    <dbReference type="NCBI Taxonomy" id="272633"/>
    <lineage>
        <taxon>Bacteria</taxon>
        <taxon>Bacillati</taxon>
        <taxon>Mycoplasmatota</taxon>
        <taxon>Mycoplasmoidales</taxon>
        <taxon>Mycoplasmoidaceae</taxon>
        <taxon>Malacoplasma</taxon>
    </lineage>
</organism>
<gene>
    <name evidence="1" type="primary">rpsH</name>
    <name type="ordered locus">MYPE10030</name>
</gene>
<name>RS8_MALP2</name>
<accession>Q8EUC7</accession>
<evidence type="ECO:0000255" key="1">
    <source>
        <dbReference type="HAMAP-Rule" id="MF_01302"/>
    </source>
</evidence>
<evidence type="ECO:0000305" key="2"/>
<reference key="1">
    <citation type="journal article" date="2002" name="Nucleic Acids Res.">
        <title>The complete genomic sequence of Mycoplasma penetrans, an intracellular bacterial pathogen in humans.</title>
        <authorList>
            <person name="Sasaki Y."/>
            <person name="Ishikawa J."/>
            <person name="Yamashita A."/>
            <person name="Oshima K."/>
            <person name="Kenri T."/>
            <person name="Furuya K."/>
            <person name="Yoshino C."/>
            <person name="Horino A."/>
            <person name="Shiba T."/>
            <person name="Sasaki T."/>
            <person name="Hattori M."/>
        </authorList>
    </citation>
    <scope>NUCLEOTIDE SEQUENCE [LARGE SCALE GENOMIC DNA]</scope>
    <source>
        <strain>HF-2</strain>
    </source>
</reference>
<sequence>MYMDPISDLLLRIKTGTKTKRNSVVVKTSKLVTNILEILKNEGYIEGFKTESIGKNKNQTVVNLKYRNNVSSITGLKQISKPGLRIYSEAQKLPKVLNGLGIAIISTSMGLMTDKNAKKNNVGGEVIAYVW</sequence>